<keyword id="KW-0049">Antioxidant</keyword>
<keyword id="KW-1003">Cell membrane</keyword>
<keyword id="KW-0186">Copper</keyword>
<keyword id="KW-0318">Glutathionylation</keyword>
<keyword id="KW-0325">Glycoprotein</keyword>
<keyword id="KW-0472">Membrane</keyword>
<keyword id="KW-0479">Metal-binding</keyword>
<keyword id="KW-0560">Oxidoreductase</keyword>
<keyword id="KW-1185">Reference proteome</keyword>
<keyword id="KW-0732">Signal</keyword>
<keyword id="KW-0812">Transmembrane</keyword>
<keyword id="KW-1133">Transmembrane helix</keyword>
<keyword id="KW-0862">Zinc</keyword>
<organism>
    <name type="scientific">Dictyostelium discoideum</name>
    <name type="common">Social amoeba</name>
    <dbReference type="NCBI Taxonomy" id="44689"/>
    <lineage>
        <taxon>Eukaryota</taxon>
        <taxon>Amoebozoa</taxon>
        <taxon>Evosea</taxon>
        <taxon>Eumycetozoa</taxon>
        <taxon>Dictyostelia</taxon>
        <taxon>Dictyosteliales</taxon>
        <taxon>Dictyosteliaceae</taxon>
        <taxon>Dictyostelium</taxon>
    </lineage>
</organism>
<dbReference type="EC" id="1.15.1.1"/>
<dbReference type="EMBL" id="AAFI02000049">
    <property type="protein sequence ID" value="EAL65940.1"/>
    <property type="molecule type" value="Genomic_DNA"/>
</dbReference>
<dbReference type="EMBL" id="BR000218">
    <property type="protein sequence ID" value="FAA00020.1"/>
    <property type="molecule type" value="mRNA"/>
</dbReference>
<dbReference type="RefSeq" id="XP_639300.1">
    <property type="nucleotide sequence ID" value="XM_634208.1"/>
</dbReference>
<dbReference type="SMR" id="Q54RQ1"/>
<dbReference type="FunCoup" id="Q54RQ1">
    <property type="interactions" value="87"/>
</dbReference>
<dbReference type="STRING" id="44689.Q54RQ1"/>
<dbReference type="GlyCosmos" id="Q54RQ1">
    <property type="glycosylation" value="6 sites, No reported glycans"/>
</dbReference>
<dbReference type="GlyGen" id="Q54RQ1">
    <property type="glycosylation" value="6 sites"/>
</dbReference>
<dbReference type="PaxDb" id="44689-DDB0232186"/>
<dbReference type="EnsemblProtists" id="EAL65940">
    <property type="protein sequence ID" value="EAL65940"/>
    <property type="gene ID" value="DDB_G0282993"/>
</dbReference>
<dbReference type="GeneID" id="8623871"/>
<dbReference type="KEGG" id="ddi:DDB_G0282993"/>
<dbReference type="dictyBase" id="DDB_G0282993">
    <property type="gene designation" value="sodC"/>
</dbReference>
<dbReference type="VEuPathDB" id="AmoebaDB:DDB_G0282993"/>
<dbReference type="eggNOG" id="KOG0441">
    <property type="taxonomic scope" value="Eukaryota"/>
</dbReference>
<dbReference type="HOGENOM" id="CLU_676923_0_0_1"/>
<dbReference type="InParanoid" id="Q54RQ1"/>
<dbReference type="OMA" id="GLSYQAH"/>
<dbReference type="Reactome" id="R-DDI-3299685">
    <property type="pathway name" value="Detoxification of Reactive Oxygen Species"/>
</dbReference>
<dbReference type="PRO" id="PR:Q54RQ1"/>
<dbReference type="Proteomes" id="UP000002195">
    <property type="component" value="Chromosome 4"/>
</dbReference>
<dbReference type="GO" id="GO:0005886">
    <property type="term" value="C:plasma membrane"/>
    <property type="evidence" value="ECO:0000314"/>
    <property type="project" value="dictyBase"/>
</dbReference>
<dbReference type="GO" id="GO:0005507">
    <property type="term" value="F:copper ion binding"/>
    <property type="evidence" value="ECO:0000318"/>
    <property type="project" value="GO_Central"/>
</dbReference>
<dbReference type="GO" id="GO:0004784">
    <property type="term" value="F:superoxide dismutase activity"/>
    <property type="evidence" value="ECO:0000314"/>
    <property type="project" value="dictyBase"/>
</dbReference>
<dbReference type="GO" id="GO:0031152">
    <property type="term" value="P:aggregation involved in sorocarp development"/>
    <property type="evidence" value="ECO:0000315"/>
    <property type="project" value="dictyBase"/>
</dbReference>
<dbReference type="GO" id="GO:0071476">
    <property type="term" value="P:cellular hypotonic response"/>
    <property type="evidence" value="ECO:0000315"/>
    <property type="project" value="dictyBase"/>
</dbReference>
<dbReference type="GO" id="GO:0009267">
    <property type="term" value="P:cellular response to starvation"/>
    <property type="evidence" value="ECO:0000270"/>
    <property type="project" value="dictyBase"/>
</dbReference>
<dbReference type="GO" id="GO:0033298">
    <property type="term" value="P:contractile vacuole organization"/>
    <property type="evidence" value="ECO:0000314"/>
    <property type="project" value="dictyBase"/>
</dbReference>
<dbReference type="GO" id="GO:0007163">
    <property type="term" value="P:establishment or maintenance of cell polarity"/>
    <property type="evidence" value="ECO:0000315"/>
    <property type="project" value="dictyBase"/>
</dbReference>
<dbReference type="GO" id="GO:0000281">
    <property type="term" value="P:mitotic cytokinesis"/>
    <property type="evidence" value="ECO:0000315"/>
    <property type="project" value="dictyBase"/>
</dbReference>
<dbReference type="GO" id="GO:0032956">
    <property type="term" value="P:regulation of actin cytoskeleton organization"/>
    <property type="evidence" value="ECO:0000315"/>
    <property type="project" value="dictyBase"/>
</dbReference>
<dbReference type="GO" id="GO:0032880">
    <property type="term" value="P:regulation of protein localization"/>
    <property type="evidence" value="ECO:0000315"/>
    <property type="project" value="dictyBase"/>
</dbReference>
<dbReference type="GO" id="GO:0019430">
    <property type="term" value="P:removal of superoxide radicals"/>
    <property type="evidence" value="ECO:0000318"/>
    <property type="project" value="GO_Central"/>
</dbReference>
<dbReference type="GO" id="GO:0006979">
    <property type="term" value="P:response to oxidative stress"/>
    <property type="evidence" value="ECO:0000270"/>
    <property type="project" value="dictyBase"/>
</dbReference>
<dbReference type="Gene3D" id="2.60.40.200">
    <property type="entry name" value="Superoxide dismutase, copper/zinc binding domain"/>
    <property type="match status" value="2"/>
</dbReference>
<dbReference type="InterPro" id="IPR036423">
    <property type="entry name" value="SOD-like_Cu/Zn_dom_sf"/>
</dbReference>
<dbReference type="InterPro" id="IPR024134">
    <property type="entry name" value="SOD_Cu/Zn_/chaperone"/>
</dbReference>
<dbReference type="InterPro" id="IPR018152">
    <property type="entry name" value="SOD_Cu/Zn_BS"/>
</dbReference>
<dbReference type="InterPro" id="IPR001424">
    <property type="entry name" value="SOD_Cu_Zn_dom"/>
</dbReference>
<dbReference type="PANTHER" id="PTHR10003">
    <property type="entry name" value="SUPEROXIDE DISMUTASE CU-ZN -RELATED"/>
    <property type="match status" value="1"/>
</dbReference>
<dbReference type="Pfam" id="PF00080">
    <property type="entry name" value="Sod_Cu"/>
    <property type="match status" value="2"/>
</dbReference>
<dbReference type="SUPFAM" id="SSF49329">
    <property type="entry name" value="Cu,Zn superoxide dismutase-like"/>
    <property type="match status" value="2"/>
</dbReference>
<dbReference type="PROSITE" id="PS00087">
    <property type="entry name" value="SOD_CU_ZN_1"/>
    <property type="match status" value="1"/>
</dbReference>
<name>SODC3_DICDI</name>
<protein>
    <recommendedName>
        <fullName>Extracellular superoxide dismutase [Cu-Zn] 3</fullName>
        <shortName>EC-SOD 3</shortName>
        <ecNumber>1.15.1.1</ecNumber>
    </recommendedName>
</protein>
<gene>
    <name type="primary">sodC</name>
    <name type="ORF">DDB_G0282993</name>
</gene>
<sequence length="407" mass="43572">MRLLSVLVFLISVISIAKADYQYAFCKFNELSIGGVEGIAHLLSTDGTTLNITFDFTTSYAQNTQFAAQILTYGYNPSSMTNLGSVFDPTNVKTAGCPSGTPRAGDIGNIQANGGNVEAQTISLNIPNIKDDANSIIGRSIAIYGGSYDCSDPSKSVIGDMISFCTIGVGNIDYSSFDKSKLTGVNTASSYSNLENAIGLAVVYNTTITKGDYIEGRVLFKALNSSFIQVSAKVSGLSYQAHGFHVHQFGDVSSDNGTSIGGHFLKTGQEHSLPPSGTRHYGDFGNFCAFSQDMMDTGYYYYETDHVTAALVIGRGMAVHNFTDKGNSDVGGSRCGQGVIALIQDADYSLNLPMDWKWDVICANGSYYGDMSTSMNSESYNDNEPGSSSTVIPFFALIIFSIIFALL</sequence>
<comment type="function">
    <text evidence="1">Protect the extracellular space from toxic effect of reactive oxygen intermediates by converting superoxyde radicals into hydrogen peroxyde and oxygen.</text>
</comment>
<comment type="catalytic activity">
    <reaction>
        <text>2 superoxide + 2 H(+) = H2O2 + O2</text>
        <dbReference type="Rhea" id="RHEA:20696"/>
        <dbReference type="ChEBI" id="CHEBI:15378"/>
        <dbReference type="ChEBI" id="CHEBI:15379"/>
        <dbReference type="ChEBI" id="CHEBI:16240"/>
        <dbReference type="ChEBI" id="CHEBI:18421"/>
        <dbReference type="EC" id="1.15.1.1"/>
    </reaction>
</comment>
<comment type="cofactor">
    <cofactor evidence="1">
        <name>Cu cation</name>
        <dbReference type="ChEBI" id="CHEBI:23378"/>
    </cofactor>
    <text evidence="1">Binds 1 copper ion per subunit.</text>
</comment>
<comment type="cofactor">
    <cofactor evidence="1">
        <name>Zn(2+)</name>
        <dbReference type="ChEBI" id="CHEBI:29105"/>
    </cofactor>
    <text evidence="1">Binds 1 zinc ion per subunit.</text>
</comment>
<comment type="subcellular location">
    <subcellularLocation>
        <location evidence="3">Cell membrane</location>
        <topology evidence="3">Single-pass type I membrane protein</topology>
        <orientation evidence="3">Extracellular side</orientation>
    </subcellularLocation>
</comment>
<comment type="similarity">
    <text evidence="3">Belongs to the Cu-Zn superoxide dismutase family.</text>
</comment>
<proteinExistence type="evidence at transcript level"/>
<feature type="signal peptide" evidence="2">
    <location>
        <begin position="1"/>
        <end position="19"/>
    </location>
</feature>
<feature type="chain" id="PRO_0000327853" description="Extracellular superoxide dismutase [Cu-Zn] 3">
    <location>
        <begin position="20"/>
        <end position="407"/>
    </location>
</feature>
<feature type="topological domain" description="Extracellular" evidence="2">
    <location>
        <begin position="20"/>
        <end position="386"/>
    </location>
</feature>
<feature type="transmembrane region" description="Helical" evidence="2">
    <location>
        <begin position="387"/>
        <end position="406"/>
    </location>
</feature>
<feature type="topological domain" description="Cytoplasmic" evidence="2">
    <location>
        <position position="407"/>
    </location>
</feature>
<feature type="binding site" evidence="1">
    <location>
        <position position="245"/>
    </location>
    <ligand>
        <name>Cu cation</name>
        <dbReference type="ChEBI" id="CHEBI:23378"/>
        <note>catalytic</note>
    </ligand>
</feature>
<feature type="binding site" evidence="1">
    <location>
        <position position="247"/>
    </location>
    <ligand>
        <name>Cu cation</name>
        <dbReference type="ChEBI" id="CHEBI:23378"/>
        <note>catalytic</note>
    </ligand>
</feature>
<feature type="binding site" evidence="1">
    <location>
        <position position="263"/>
    </location>
    <ligand>
        <name>Cu cation</name>
        <dbReference type="ChEBI" id="CHEBI:23378"/>
        <note>catalytic</note>
    </ligand>
</feature>
<feature type="binding site" evidence="1">
    <location>
        <position position="263"/>
    </location>
    <ligand>
        <name>Zn(2+)</name>
        <dbReference type="ChEBI" id="CHEBI:29105"/>
        <note>structural</note>
    </ligand>
</feature>
<feature type="binding site" evidence="1">
    <location>
        <position position="271"/>
    </location>
    <ligand>
        <name>Zn(2+)</name>
        <dbReference type="ChEBI" id="CHEBI:29105"/>
        <note>structural</note>
    </ligand>
</feature>
<feature type="binding site" evidence="1">
    <location>
        <position position="280"/>
    </location>
    <ligand>
        <name>Zn(2+)</name>
        <dbReference type="ChEBI" id="CHEBI:29105"/>
        <note>structural</note>
    </ligand>
</feature>
<feature type="binding site" evidence="1">
    <location>
        <position position="283"/>
    </location>
    <ligand>
        <name>Zn(2+)</name>
        <dbReference type="ChEBI" id="CHEBI:29105"/>
        <note>structural</note>
    </ligand>
</feature>
<feature type="binding site" evidence="1">
    <location>
        <position position="320"/>
    </location>
    <ligand>
        <name>Cu cation</name>
        <dbReference type="ChEBI" id="CHEBI:23378"/>
        <note>catalytic</note>
    </ligand>
</feature>
<feature type="glycosylation site" description="N-linked (GlcNAc...) asparagine" evidence="2">
    <location>
        <position position="51"/>
    </location>
</feature>
<feature type="glycosylation site" description="N-linked (GlcNAc...) asparagine" evidence="2">
    <location>
        <position position="205"/>
    </location>
</feature>
<feature type="glycosylation site" description="N-linked (GlcNAc...) asparagine" evidence="2">
    <location>
        <position position="224"/>
    </location>
</feature>
<feature type="glycosylation site" description="N-linked (GlcNAc...) asparagine" evidence="2">
    <location>
        <position position="256"/>
    </location>
</feature>
<feature type="glycosylation site" description="N-linked (GlcNAc...) asparagine" evidence="2">
    <location>
        <position position="321"/>
    </location>
</feature>
<feature type="glycosylation site" description="N-linked (GlcNAc...) asparagine" evidence="2">
    <location>
        <position position="364"/>
    </location>
</feature>
<feature type="sequence conflict" description="In Ref. 1; FAA00020." evidence="3" ref="1">
    <original>A</original>
    <variation>V</variation>
    <location>
        <position position="68"/>
    </location>
</feature>
<feature type="sequence conflict" description="In Ref. 1; FAA00020." evidence="3" ref="1">
    <original>LP</original>
    <variation>HT</variation>
    <location>
        <begin position="352"/>
        <end position="353"/>
    </location>
</feature>
<reference key="1">
    <citation type="journal article" date="2005" name="Nature">
        <title>The genome of the social amoeba Dictyostelium discoideum.</title>
        <authorList>
            <person name="Eichinger L."/>
            <person name="Pachebat J.A."/>
            <person name="Gloeckner G."/>
            <person name="Rajandream M.A."/>
            <person name="Sucgang R."/>
            <person name="Berriman M."/>
            <person name="Song J."/>
            <person name="Olsen R."/>
            <person name="Szafranski K."/>
            <person name="Xu Q."/>
            <person name="Tunggal B."/>
            <person name="Kummerfeld S."/>
            <person name="Madera M."/>
            <person name="Konfortov B.A."/>
            <person name="Rivero F."/>
            <person name="Bankier A.T."/>
            <person name="Lehmann R."/>
            <person name="Hamlin N."/>
            <person name="Davies R."/>
            <person name="Gaudet P."/>
            <person name="Fey P."/>
            <person name="Pilcher K."/>
            <person name="Chen G."/>
            <person name="Saunders D."/>
            <person name="Sodergren E.J."/>
            <person name="Davis P."/>
            <person name="Kerhornou A."/>
            <person name="Nie X."/>
            <person name="Hall N."/>
            <person name="Anjard C."/>
            <person name="Hemphill L."/>
            <person name="Bason N."/>
            <person name="Farbrother P."/>
            <person name="Desany B."/>
            <person name="Just E."/>
            <person name="Morio T."/>
            <person name="Rost R."/>
            <person name="Churcher C.M."/>
            <person name="Cooper J."/>
            <person name="Haydock S."/>
            <person name="van Driessche N."/>
            <person name="Cronin A."/>
            <person name="Goodhead I."/>
            <person name="Muzny D.M."/>
            <person name="Mourier T."/>
            <person name="Pain A."/>
            <person name="Lu M."/>
            <person name="Harper D."/>
            <person name="Lindsay R."/>
            <person name="Hauser H."/>
            <person name="James K.D."/>
            <person name="Quiles M."/>
            <person name="Madan Babu M."/>
            <person name="Saito T."/>
            <person name="Buchrieser C."/>
            <person name="Wardroper A."/>
            <person name="Felder M."/>
            <person name="Thangavelu M."/>
            <person name="Johnson D."/>
            <person name="Knights A."/>
            <person name="Loulseged H."/>
            <person name="Mungall K.L."/>
            <person name="Oliver K."/>
            <person name="Price C."/>
            <person name="Quail M.A."/>
            <person name="Urushihara H."/>
            <person name="Hernandez J."/>
            <person name="Rabbinowitsch E."/>
            <person name="Steffen D."/>
            <person name="Sanders M."/>
            <person name="Ma J."/>
            <person name="Kohara Y."/>
            <person name="Sharp S."/>
            <person name="Simmonds M.N."/>
            <person name="Spiegler S."/>
            <person name="Tivey A."/>
            <person name="Sugano S."/>
            <person name="White B."/>
            <person name="Walker D."/>
            <person name="Woodward J.R."/>
            <person name="Winckler T."/>
            <person name="Tanaka Y."/>
            <person name="Shaulsky G."/>
            <person name="Schleicher M."/>
            <person name="Weinstock G.M."/>
            <person name="Rosenthal A."/>
            <person name="Cox E.C."/>
            <person name="Chisholm R.L."/>
            <person name="Gibbs R.A."/>
            <person name="Loomis W.F."/>
            <person name="Platzer M."/>
            <person name="Kay R.R."/>
            <person name="Williams J.G."/>
            <person name="Dear P.H."/>
            <person name="Noegel A.A."/>
            <person name="Barrell B.G."/>
            <person name="Kuspa A."/>
        </authorList>
    </citation>
    <scope>NUCLEOTIDE SEQUENCE [LARGE SCALE GENOMIC DNA]</scope>
    <source>
        <strain>AX4</strain>
    </source>
</reference>
<reference key="2">
    <citation type="journal article" date="2003" name="Biol. Pharm. Bull.">
        <title>Multinucleation of the sodC-deficient Dictyostelium discoideum.</title>
        <authorList>
            <person name="Tsuji A."/>
            <person name="Akaza Y."/>
            <person name="Nakamura S."/>
            <person name="Kodaira K."/>
            <person name="Yasukawa H."/>
        </authorList>
    </citation>
    <scope>IDENTIFICATION</scope>
</reference>
<accession>Q54RQ1</accession>
<accession>Q52KB2</accession>
<evidence type="ECO:0000250" key="1"/>
<evidence type="ECO:0000255" key="2"/>
<evidence type="ECO:0000305" key="3"/>